<evidence type="ECO:0000255" key="1">
    <source>
        <dbReference type="HAMAP-Rule" id="MF_00252"/>
    </source>
</evidence>
<accession>Q8KCM7</accession>
<proteinExistence type="inferred from homology"/>
<reference key="1">
    <citation type="journal article" date="2002" name="Proc. Natl. Acad. Sci. U.S.A.">
        <title>The complete genome sequence of Chlorobium tepidum TLS, a photosynthetic, anaerobic, green-sulfur bacterium.</title>
        <authorList>
            <person name="Eisen J.A."/>
            <person name="Nelson K.E."/>
            <person name="Paulsen I.T."/>
            <person name="Heidelberg J.F."/>
            <person name="Wu M."/>
            <person name="Dodson R.J."/>
            <person name="DeBoy R.T."/>
            <person name="Gwinn M.L."/>
            <person name="Nelson W.C."/>
            <person name="Haft D.H."/>
            <person name="Hickey E.K."/>
            <person name="Peterson J.D."/>
            <person name="Durkin A.S."/>
            <person name="Kolonay J.F."/>
            <person name="Yang F."/>
            <person name="Holt I.E."/>
            <person name="Umayam L.A."/>
            <person name="Mason T.M."/>
            <person name="Brenner M."/>
            <person name="Shea T.P."/>
            <person name="Parksey D.S."/>
            <person name="Nierman W.C."/>
            <person name="Feldblyum T.V."/>
            <person name="Hansen C.L."/>
            <person name="Craven M.B."/>
            <person name="Radune D."/>
            <person name="Vamathevan J.J."/>
            <person name="Khouri H.M."/>
            <person name="White O."/>
            <person name="Gruber T.M."/>
            <person name="Ketchum K.A."/>
            <person name="Venter J.C."/>
            <person name="Tettelin H."/>
            <person name="Bryant D.A."/>
            <person name="Fraser C.M."/>
        </authorList>
    </citation>
    <scope>NUCLEOTIDE SEQUENCE [LARGE SCALE GENOMIC DNA]</scope>
    <source>
        <strain>ATCC 49652 / DSM 12025 / NBRC 103806 / TLS</strain>
    </source>
</reference>
<comment type="catalytic activity">
    <reaction evidence="1">
        <text>tRNA(Lys) + L-lysine + ATP = L-lysyl-tRNA(Lys) + AMP + diphosphate</text>
        <dbReference type="Rhea" id="RHEA:20792"/>
        <dbReference type="Rhea" id="RHEA-COMP:9696"/>
        <dbReference type="Rhea" id="RHEA-COMP:9697"/>
        <dbReference type="ChEBI" id="CHEBI:30616"/>
        <dbReference type="ChEBI" id="CHEBI:32551"/>
        <dbReference type="ChEBI" id="CHEBI:33019"/>
        <dbReference type="ChEBI" id="CHEBI:78442"/>
        <dbReference type="ChEBI" id="CHEBI:78529"/>
        <dbReference type="ChEBI" id="CHEBI:456215"/>
        <dbReference type="EC" id="6.1.1.6"/>
    </reaction>
</comment>
<comment type="cofactor">
    <cofactor evidence="1">
        <name>Mg(2+)</name>
        <dbReference type="ChEBI" id="CHEBI:18420"/>
    </cofactor>
    <text evidence="1">Binds 3 Mg(2+) ions per subunit.</text>
</comment>
<comment type="subunit">
    <text evidence="1">Homodimer.</text>
</comment>
<comment type="subcellular location">
    <subcellularLocation>
        <location evidence="1">Cytoplasm</location>
    </subcellularLocation>
</comment>
<comment type="similarity">
    <text evidence="1">Belongs to the class-II aminoacyl-tRNA synthetase family.</text>
</comment>
<feature type="chain" id="PRO_0000152614" description="Lysine--tRNA ligase">
    <location>
        <begin position="1"/>
        <end position="511"/>
    </location>
</feature>
<feature type="binding site" evidence="1">
    <location>
        <position position="422"/>
    </location>
    <ligand>
        <name>Mg(2+)</name>
        <dbReference type="ChEBI" id="CHEBI:18420"/>
        <label>1</label>
    </ligand>
</feature>
<feature type="binding site" evidence="1">
    <location>
        <position position="429"/>
    </location>
    <ligand>
        <name>Mg(2+)</name>
        <dbReference type="ChEBI" id="CHEBI:18420"/>
        <label>1</label>
    </ligand>
</feature>
<feature type="binding site" evidence="1">
    <location>
        <position position="429"/>
    </location>
    <ligand>
        <name>Mg(2+)</name>
        <dbReference type="ChEBI" id="CHEBI:18420"/>
        <label>2</label>
    </ligand>
</feature>
<gene>
    <name evidence="1" type="primary">lysS</name>
    <name type="ordered locus">CT1387</name>
</gene>
<organism>
    <name type="scientific">Chlorobaculum tepidum (strain ATCC 49652 / DSM 12025 / NBRC 103806 / TLS)</name>
    <name type="common">Chlorobium tepidum</name>
    <dbReference type="NCBI Taxonomy" id="194439"/>
    <lineage>
        <taxon>Bacteria</taxon>
        <taxon>Pseudomonadati</taxon>
        <taxon>Chlorobiota</taxon>
        <taxon>Chlorobiia</taxon>
        <taxon>Chlorobiales</taxon>
        <taxon>Chlorobiaceae</taxon>
        <taxon>Chlorobaculum</taxon>
    </lineage>
</organism>
<sequence>MSNAPEQKNPQNDPSPAVSLNDQMKRRFEERTHLAEAGINPYPYKFDVTTTSKAIIDSFSDENPADVSVAGRIMAIRRMGKASFLHIQDSEGRIQIYLKKDDVGEASYNTFKLLDIGDIVGVSGFTFKTKTGEISVHARQFELLAKSLRPIPIAKEKEVDGQKVIYDAFSDRELRYRQRYVDLIVNPEVRGTFIKRTKIVALMRNYFASNGWLEVETPILQPIYGGAAARPFTTHHNALDMQLYLRIANELYLKRLIVGGFDGVFEFAKDFRNEGIDRFHNPEFTQVELYVAYKDYIWMMELVEDLLHKACVEVNGKDSTMFLGNEINLKPPFRRLTIADSIREYTGMEIRGKSEAQLRDIAKDLGLELDPKISSGKIIDEIFGEFVEPKLIQPTFITDYPEEMSPLAKKHRSEPGLVERFELIVGGKEVCNSFSELNDPVIQRERLEEQARLRQRGDDEAMIVDEDFLRALEYGMPPCAGLGIGIDRMVMLLTGQDSIRDVIFFPHMKPE</sequence>
<dbReference type="EC" id="6.1.1.6" evidence="1"/>
<dbReference type="EMBL" id="AE006470">
    <property type="protein sequence ID" value="AAM72616.1"/>
    <property type="molecule type" value="Genomic_DNA"/>
</dbReference>
<dbReference type="RefSeq" id="NP_662274.1">
    <property type="nucleotide sequence ID" value="NC_002932.3"/>
</dbReference>
<dbReference type="RefSeq" id="WP_010933055.1">
    <property type="nucleotide sequence ID" value="NC_002932.3"/>
</dbReference>
<dbReference type="SMR" id="Q8KCM7"/>
<dbReference type="STRING" id="194439.CT1387"/>
<dbReference type="EnsemblBacteria" id="AAM72616">
    <property type="protein sequence ID" value="AAM72616"/>
    <property type="gene ID" value="CT1387"/>
</dbReference>
<dbReference type="KEGG" id="cte:CT1387"/>
<dbReference type="PATRIC" id="fig|194439.7.peg.1260"/>
<dbReference type="eggNOG" id="COG1190">
    <property type="taxonomic scope" value="Bacteria"/>
</dbReference>
<dbReference type="HOGENOM" id="CLU_008255_6_0_10"/>
<dbReference type="OrthoDB" id="9801152at2"/>
<dbReference type="Proteomes" id="UP000001007">
    <property type="component" value="Chromosome"/>
</dbReference>
<dbReference type="GO" id="GO:0005829">
    <property type="term" value="C:cytosol"/>
    <property type="evidence" value="ECO:0007669"/>
    <property type="project" value="TreeGrafter"/>
</dbReference>
<dbReference type="GO" id="GO:0005524">
    <property type="term" value="F:ATP binding"/>
    <property type="evidence" value="ECO:0007669"/>
    <property type="project" value="UniProtKB-UniRule"/>
</dbReference>
<dbReference type="GO" id="GO:0004824">
    <property type="term" value="F:lysine-tRNA ligase activity"/>
    <property type="evidence" value="ECO:0007669"/>
    <property type="project" value="UniProtKB-UniRule"/>
</dbReference>
<dbReference type="GO" id="GO:0000287">
    <property type="term" value="F:magnesium ion binding"/>
    <property type="evidence" value="ECO:0007669"/>
    <property type="project" value="UniProtKB-UniRule"/>
</dbReference>
<dbReference type="GO" id="GO:0000049">
    <property type="term" value="F:tRNA binding"/>
    <property type="evidence" value="ECO:0007669"/>
    <property type="project" value="TreeGrafter"/>
</dbReference>
<dbReference type="GO" id="GO:0006430">
    <property type="term" value="P:lysyl-tRNA aminoacylation"/>
    <property type="evidence" value="ECO:0007669"/>
    <property type="project" value="UniProtKB-UniRule"/>
</dbReference>
<dbReference type="CDD" id="cd00775">
    <property type="entry name" value="LysRS_core"/>
    <property type="match status" value="1"/>
</dbReference>
<dbReference type="CDD" id="cd04322">
    <property type="entry name" value="LysRS_N"/>
    <property type="match status" value="1"/>
</dbReference>
<dbReference type="FunFam" id="2.40.50.140:FF:000024">
    <property type="entry name" value="Lysine--tRNA ligase"/>
    <property type="match status" value="1"/>
</dbReference>
<dbReference type="FunFam" id="3.30.930.10:FF:000238">
    <property type="entry name" value="Lysine--tRNA ligase"/>
    <property type="match status" value="1"/>
</dbReference>
<dbReference type="Gene3D" id="3.30.930.10">
    <property type="entry name" value="Bira Bifunctional Protein, Domain 2"/>
    <property type="match status" value="1"/>
</dbReference>
<dbReference type="Gene3D" id="2.40.50.140">
    <property type="entry name" value="Nucleic acid-binding proteins"/>
    <property type="match status" value="1"/>
</dbReference>
<dbReference type="HAMAP" id="MF_00252">
    <property type="entry name" value="Lys_tRNA_synth_class2"/>
    <property type="match status" value="1"/>
</dbReference>
<dbReference type="InterPro" id="IPR004364">
    <property type="entry name" value="Aa-tRNA-synt_II"/>
</dbReference>
<dbReference type="InterPro" id="IPR006195">
    <property type="entry name" value="aa-tRNA-synth_II"/>
</dbReference>
<dbReference type="InterPro" id="IPR045864">
    <property type="entry name" value="aa-tRNA-synth_II/BPL/LPL"/>
</dbReference>
<dbReference type="InterPro" id="IPR002313">
    <property type="entry name" value="Lys-tRNA-ligase_II"/>
</dbReference>
<dbReference type="InterPro" id="IPR044136">
    <property type="entry name" value="Lys-tRNA-ligase_II_N"/>
</dbReference>
<dbReference type="InterPro" id="IPR018149">
    <property type="entry name" value="Lys-tRNA-synth_II_C"/>
</dbReference>
<dbReference type="InterPro" id="IPR012340">
    <property type="entry name" value="NA-bd_OB-fold"/>
</dbReference>
<dbReference type="InterPro" id="IPR004365">
    <property type="entry name" value="NA-bd_OB_tRNA"/>
</dbReference>
<dbReference type="NCBIfam" id="TIGR00499">
    <property type="entry name" value="lysS_bact"/>
    <property type="match status" value="1"/>
</dbReference>
<dbReference type="NCBIfam" id="NF001756">
    <property type="entry name" value="PRK00484.1"/>
    <property type="match status" value="1"/>
</dbReference>
<dbReference type="PANTHER" id="PTHR42918:SF15">
    <property type="entry name" value="LYSINE--TRNA LIGASE, CHLOROPLASTIC_MITOCHONDRIAL"/>
    <property type="match status" value="1"/>
</dbReference>
<dbReference type="PANTHER" id="PTHR42918">
    <property type="entry name" value="LYSYL-TRNA SYNTHETASE"/>
    <property type="match status" value="1"/>
</dbReference>
<dbReference type="Pfam" id="PF00152">
    <property type="entry name" value="tRNA-synt_2"/>
    <property type="match status" value="1"/>
</dbReference>
<dbReference type="Pfam" id="PF01336">
    <property type="entry name" value="tRNA_anti-codon"/>
    <property type="match status" value="1"/>
</dbReference>
<dbReference type="PRINTS" id="PR00982">
    <property type="entry name" value="TRNASYNTHLYS"/>
</dbReference>
<dbReference type="SUPFAM" id="SSF55681">
    <property type="entry name" value="Class II aaRS and biotin synthetases"/>
    <property type="match status" value="1"/>
</dbReference>
<dbReference type="SUPFAM" id="SSF50249">
    <property type="entry name" value="Nucleic acid-binding proteins"/>
    <property type="match status" value="1"/>
</dbReference>
<dbReference type="PROSITE" id="PS50862">
    <property type="entry name" value="AA_TRNA_LIGASE_II"/>
    <property type="match status" value="1"/>
</dbReference>
<keyword id="KW-0030">Aminoacyl-tRNA synthetase</keyword>
<keyword id="KW-0067">ATP-binding</keyword>
<keyword id="KW-0963">Cytoplasm</keyword>
<keyword id="KW-0436">Ligase</keyword>
<keyword id="KW-0460">Magnesium</keyword>
<keyword id="KW-0479">Metal-binding</keyword>
<keyword id="KW-0547">Nucleotide-binding</keyword>
<keyword id="KW-0648">Protein biosynthesis</keyword>
<keyword id="KW-1185">Reference proteome</keyword>
<protein>
    <recommendedName>
        <fullName evidence="1">Lysine--tRNA ligase</fullName>
        <ecNumber evidence="1">6.1.1.6</ecNumber>
    </recommendedName>
    <alternativeName>
        <fullName evidence="1">Lysyl-tRNA synthetase</fullName>
        <shortName evidence="1">LysRS</shortName>
    </alternativeName>
</protein>
<name>SYK_CHLTE</name>